<proteinExistence type="predicted"/>
<dbReference type="EMBL" id="AE000516">
    <property type="protein sequence ID" value="AAK45836.1"/>
    <property type="molecule type" value="Genomic_DNA"/>
</dbReference>
<dbReference type="PIR" id="G70722">
    <property type="entry name" value="G70722"/>
</dbReference>
<dbReference type="SMR" id="P9WLV6"/>
<dbReference type="KEGG" id="mtc:MT1569"/>
<dbReference type="PATRIC" id="fig|83331.31.peg.1690"/>
<dbReference type="HOGENOM" id="CLU_189127_0_0_11"/>
<dbReference type="Proteomes" id="UP000001020">
    <property type="component" value="Chromosome"/>
</dbReference>
<dbReference type="Gene3D" id="3.90.1150.10">
    <property type="entry name" value="Aspartate Aminotransferase, domain 1"/>
    <property type="match status" value="1"/>
</dbReference>
<dbReference type="InterPro" id="IPR000653">
    <property type="entry name" value="DegT/StrS_aminotransferase"/>
</dbReference>
<dbReference type="InterPro" id="IPR015422">
    <property type="entry name" value="PyrdxlP-dep_Trfase_small"/>
</dbReference>
<dbReference type="Pfam" id="PF01041">
    <property type="entry name" value="DegT_DnrJ_EryC1"/>
    <property type="match status" value="1"/>
</dbReference>
<evidence type="ECO:0000305" key="1"/>
<protein>
    <recommendedName>
        <fullName>Uncharacterized protein MT1569</fullName>
    </recommendedName>
</protein>
<sequence length="89" mass="9200">MRCGCLACDGVLCANGPGRPRRPALTCTAVATRTLHSLATNAELVESADLTVTEDICSRIVSLPVHDHMAIADVARVVAPFGEGLARGG</sequence>
<organism>
    <name type="scientific">Mycobacterium tuberculosis (strain CDC 1551 / Oshkosh)</name>
    <dbReference type="NCBI Taxonomy" id="83331"/>
    <lineage>
        <taxon>Bacteria</taxon>
        <taxon>Bacillati</taxon>
        <taxon>Actinomycetota</taxon>
        <taxon>Actinomycetes</taxon>
        <taxon>Mycobacteriales</taxon>
        <taxon>Mycobacteriaceae</taxon>
        <taxon>Mycobacterium</taxon>
        <taxon>Mycobacterium tuberculosis complex</taxon>
    </lineage>
</organism>
<keyword id="KW-1185">Reference proteome</keyword>
<gene>
    <name type="ordered locus">MT1569</name>
</gene>
<feature type="chain" id="PRO_0000427412" description="Uncharacterized protein MT1569">
    <location>
        <begin position="1"/>
        <end position="89"/>
    </location>
</feature>
<accession>P9WLV6</accession>
<accession>L0T9V5</accession>
<accession>P64861</accession>
<accession>Q50588</accession>
<comment type="similarity">
    <text evidence="1">To M.tuberculosis Rv3402c.</text>
</comment>
<reference key="1">
    <citation type="journal article" date="2002" name="J. Bacteriol.">
        <title>Whole-genome comparison of Mycobacterium tuberculosis clinical and laboratory strains.</title>
        <authorList>
            <person name="Fleischmann R.D."/>
            <person name="Alland D."/>
            <person name="Eisen J.A."/>
            <person name="Carpenter L."/>
            <person name="White O."/>
            <person name="Peterson J.D."/>
            <person name="DeBoy R.T."/>
            <person name="Dodson R.J."/>
            <person name="Gwinn M.L."/>
            <person name="Haft D.H."/>
            <person name="Hickey E.K."/>
            <person name="Kolonay J.F."/>
            <person name="Nelson W.C."/>
            <person name="Umayam L.A."/>
            <person name="Ermolaeva M.D."/>
            <person name="Salzberg S.L."/>
            <person name="Delcher A."/>
            <person name="Utterback T.R."/>
            <person name="Weidman J.F."/>
            <person name="Khouri H.M."/>
            <person name="Gill J."/>
            <person name="Mikula A."/>
            <person name="Bishai W."/>
            <person name="Jacobs W.R. Jr."/>
            <person name="Venter J.C."/>
            <person name="Fraser C.M."/>
        </authorList>
    </citation>
    <scope>NUCLEOTIDE SEQUENCE [LARGE SCALE GENOMIC DNA]</scope>
    <source>
        <strain>CDC 1551 / Oshkosh</strain>
    </source>
</reference>
<name>Y1519_MYCTO</name>